<reference key="1">
    <citation type="submission" date="2009-01" db="EMBL/GenBank/DDBJ databases">
        <title>Complete sequence of chromosome of Caldicellulosiruptor becscii DSM 6725.</title>
        <authorList>
            <person name="Lucas S."/>
            <person name="Copeland A."/>
            <person name="Lapidus A."/>
            <person name="Glavina del Rio T."/>
            <person name="Tice H."/>
            <person name="Bruce D."/>
            <person name="Goodwin L."/>
            <person name="Pitluck S."/>
            <person name="Sims D."/>
            <person name="Meincke L."/>
            <person name="Brettin T."/>
            <person name="Detter J.C."/>
            <person name="Han C."/>
            <person name="Larimer F."/>
            <person name="Land M."/>
            <person name="Hauser L."/>
            <person name="Kyrpides N."/>
            <person name="Ovchinnikova G."/>
            <person name="Kataeva I."/>
            <person name="Adams M.W.W."/>
        </authorList>
    </citation>
    <scope>NUCLEOTIDE SEQUENCE [LARGE SCALE GENOMIC DNA]</scope>
    <source>
        <strain>ATCC BAA-1888 / DSM 6725 / KCTC 15123 / Z-1320</strain>
    </source>
</reference>
<accession>B9MRS9</accession>
<evidence type="ECO:0000255" key="1">
    <source>
        <dbReference type="HAMAP-Rule" id="MF_00281"/>
    </source>
</evidence>
<feature type="chain" id="PRO_1000199294" description="Phenylalanine--tRNA ligase alpha subunit">
    <location>
        <begin position="1"/>
        <end position="340"/>
    </location>
</feature>
<feature type="binding site" evidence="1">
    <location>
        <position position="254"/>
    </location>
    <ligand>
        <name>Mg(2+)</name>
        <dbReference type="ChEBI" id="CHEBI:18420"/>
        <note>shared with beta subunit</note>
    </ligand>
</feature>
<name>SYFA_CALBD</name>
<gene>
    <name evidence="1" type="primary">pheS</name>
    <name type="ordered locus">Athe_1283</name>
</gene>
<protein>
    <recommendedName>
        <fullName evidence="1">Phenylalanine--tRNA ligase alpha subunit</fullName>
        <ecNumber evidence="1">6.1.1.20</ecNumber>
    </recommendedName>
    <alternativeName>
        <fullName evidence="1">Phenylalanyl-tRNA synthetase alpha subunit</fullName>
        <shortName evidence="1">PheRS</shortName>
    </alternativeName>
</protein>
<comment type="catalytic activity">
    <reaction evidence="1">
        <text>tRNA(Phe) + L-phenylalanine + ATP = L-phenylalanyl-tRNA(Phe) + AMP + diphosphate + H(+)</text>
        <dbReference type="Rhea" id="RHEA:19413"/>
        <dbReference type="Rhea" id="RHEA-COMP:9668"/>
        <dbReference type="Rhea" id="RHEA-COMP:9699"/>
        <dbReference type="ChEBI" id="CHEBI:15378"/>
        <dbReference type="ChEBI" id="CHEBI:30616"/>
        <dbReference type="ChEBI" id="CHEBI:33019"/>
        <dbReference type="ChEBI" id="CHEBI:58095"/>
        <dbReference type="ChEBI" id="CHEBI:78442"/>
        <dbReference type="ChEBI" id="CHEBI:78531"/>
        <dbReference type="ChEBI" id="CHEBI:456215"/>
        <dbReference type="EC" id="6.1.1.20"/>
    </reaction>
</comment>
<comment type="cofactor">
    <cofactor evidence="1">
        <name>Mg(2+)</name>
        <dbReference type="ChEBI" id="CHEBI:18420"/>
    </cofactor>
    <text evidence="1">Binds 2 magnesium ions per tetramer.</text>
</comment>
<comment type="subunit">
    <text evidence="1">Tetramer of two alpha and two beta subunits.</text>
</comment>
<comment type="subcellular location">
    <subcellularLocation>
        <location evidence="1">Cytoplasm</location>
    </subcellularLocation>
</comment>
<comment type="similarity">
    <text evidence="1">Belongs to the class-II aminoacyl-tRNA synthetase family. Phe-tRNA synthetase alpha subunit type 1 subfamily.</text>
</comment>
<keyword id="KW-0030">Aminoacyl-tRNA synthetase</keyword>
<keyword id="KW-0067">ATP-binding</keyword>
<keyword id="KW-0963">Cytoplasm</keyword>
<keyword id="KW-0436">Ligase</keyword>
<keyword id="KW-0460">Magnesium</keyword>
<keyword id="KW-0479">Metal-binding</keyword>
<keyword id="KW-0547">Nucleotide-binding</keyword>
<keyword id="KW-0648">Protein biosynthesis</keyword>
<dbReference type="EC" id="6.1.1.20" evidence="1"/>
<dbReference type="EMBL" id="CP001393">
    <property type="protein sequence ID" value="ACM60383.1"/>
    <property type="molecule type" value="Genomic_DNA"/>
</dbReference>
<dbReference type="RefSeq" id="WP_013430381.1">
    <property type="nucleotide sequence ID" value="NC_012034.1"/>
</dbReference>
<dbReference type="SMR" id="B9MRS9"/>
<dbReference type="STRING" id="521460.Athe_1283"/>
<dbReference type="GeneID" id="31772631"/>
<dbReference type="KEGG" id="ate:Athe_1283"/>
<dbReference type="eggNOG" id="COG0016">
    <property type="taxonomic scope" value="Bacteria"/>
</dbReference>
<dbReference type="HOGENOM" id="CLU_025086_0_1_9"/>
<dbReference type="Proteomes" id="UP000007723">
    <property type="component" value="Chromosome"/>
</dbReference>
<dbReference type="GO" id="GO:0005737">
    <property type="term" value="C:cytoplasm"/>
    <property type="evidence" value="ECO:0007669"/>
    <property type="project" value="UniProtKB-SubCell"/>
</dbReference>
<dbReference type="GO" id="GO:0005524">
    <property type="term" value="F:ATP binding"/>
    <property type="evidence" value="ECO:0007669"/>
    <property type="project" value="UniProtKB-UniRule"/>
</dbReference>
<dbReference type="GO" id="GO:0140096">
    <property type="term" value="F:catalytic activity, acting on a protein"/>
    <property type="evidence" value="ECO:0007669"/>
    <property type="project" value="UniProtKB-ARBA"/>
</dbReference>
<dbReference type="GO" id="GO:0000287">
    <property type="term" value="F:magnesium ion binding"/>
    <property type="evidence" value="ECO:0007669"/>
    <property type="project" value="UniProtKB-UniRule"/>
</dbReference>
<dbReference type="GO" id="GO:0004826">
    <property type="term" value="F:phenylalanine-tRNA ligase activity"/>
    <property type="evidence" value="ECO:0007669"/>
    <property type="project" value="UniProtKB-UniRule"/>
</dbReference>
<dbReference type="GO" id="GO:0016740">
    <property type="term" value="F:transferase activity"/>
    <property type="evidence" value="ECO:0007669"/>
    <property type="project" value="UniProtKB-ARBA"/>
</dbReference>
<dbReference type="GO" id="GO:0000049">
    <property type="term" value="F:tRNA binding"/>
    <property type="evidence" value="ECO:0007669"/>
    <property type="project" value="InterPro"/>
</dbReference>
<dbReference type="GO" id="GO:0006432">
    <property type="term" value="P:phenylalanyl-tRNA aminoacylation"/>
    <property type="evidence" value="ECO:0007669"/>
    <property type="project" value="UniProtKB-UniRule"/>
</dbReference>
<dbReference type="CDD" id="cd00496">
    <property type="entry name" value="PheRS_alpha_core"/>
    <property type="match status" value="1"/>
</dbReference>
<dbReference type="FunFam" id="3.30.930.10:FF:000003">
    <property type="entry name" value="Phenylalanine--tRNA ligase alpha subunit"/>
    <property type="match status" value="1"/>
</dbReference>
<dbReference type="Gene3D" id="3.30.930.10">
    <property type="entry name" value="Bira Bifunctional Protein, Domain 2"/>
    <property type="match status" value="1"/>
</dbReference>
<dbReference type="HAMAP" id="MF_00281">
    <property type="entry name" value="Phe_tRNA_synth_alpha1"/>
    <property type="match status" value="1"/>
</dbReference>
<dbReference type="InterPro" id="IPR006195">
    <property type="entry name" value="aa-tRNA-synth_II"/>
</dbReference>
<dbReference type="InterPro" id="IPR045864">
    <property type="entry name" value="aa-tRNA-synth_II/BPL/LPL"/>
</dbReference>
<dbReference type="InterPro" id="IPR004529">
    <property type="entry name" value="Phe-tRNA-synth_IIc_asu"/>
</dbReference>
<dbReference type="InterPro" id="IPR004188">
    <property type="entry name" value="Phe-tRNA_ligase_II_N"/>
</dbReference>
<dbReference type="InterPro" id="IPR022911">
    <property type="entry name" value="Phe_tRNA_ligase_alpha1_bac"/>
</dbReference>
<dbReference type="InterPro" id="IPR002319">
    <property type="entry name" value="Phenylalanyl-tRNA_Synthase"/>
</dbReference>
<dbReference type="InterPro" id="IPR010978">
    <property type="entry name" value="tRNA-bd_arm"/>
</dbReference>
<dbReference type="NCBIfam" id="TIGR00468">
    <property type="entry name" value="pheS"/>
    <property type="match status" value="1"/>
</dbReference>
<dbReference type="PANTHER" id="PTHR11538:SF41">
    <property type="entry name" value="PHENYLALANINE--TRNA LIGASE, MITOCHONDRIAL"/>
    <property type="match status" value="1"/>
</dbReference>
<dbReference type="PANTHER" id="PTHR11538">
    <property type="entry name" value="PHENYLALANYL-TRNA SYNTHETASE"/>
    <property type="match status" value="1"/>
</dbReference>
<dbReference type="Pfam" id="PF02912">
    <property type="entry name" value="Phe_tRNA-synt_N"/>
    <property type="match status" value="1"/>
</dbReference>
<dbReference type="Pfam" id="PF01409">
    <property type="entry name" value="tRNA-synt_2d"/>
    <property type="match status" value="1"/>
</dbReference>
<dbReference type="SUPFAM" id="SSF55681">
    <property type="entry name" value="Class II aaRS and biotin synthetases"/>
    <property type="match status" value="1"/>
</dbReference>
<dbReference type="SUPFAM" id="SSF46589">
    <property type="entry name" value="tRNA-binding arm"/>
    <property type="match status" value="1"/>
</dbReference>
<dbReference type="PROSITE" id="PS50862">
    <property type="entry name" value="AA_TRNA_LIGASE_II"/>
    <property type="match status" value="1"/>
</dbReference>
<sequence length="340" mass="39087">MNTDIANLKNQCIEELSRIKSLQELEDFQVKYLGKKGILKSKLKELSKLEPAIRAQVGKELNSLREYLEESIAIQRKRFLEEEKQKRIQSERIDVTIPGKRVEIGAIHILSQVQNEIAEIFLNMGYEIAEGPEVELDYYNFEALNIPADHPARDTQDTFYISEDVLLRTHTSPVQIRVMKSKKPPIKIISPGRVYRSDEVDSTHSPIFHQIEGLFVDKGVTMADLKGTLEVFAKRFFGEQTKVRFRPHHFPFTEPSAEVDISCIFCGGKGCRTCKGEGWIEILGAGMVHRKVLLNCGIDPDIYTGFAFGMGVERIALLRYEIEDIRLFYENDLRFLKQFR</sequence>
<proteinExistence type="inferred from homology"/>
<organism>
    <name type="scientific">Caldicellulosiruptor bescii (strain ATCC BAA-1888 / DSM 6725 / KCTC 15123 / Z-1320)</name>
    <name type="common">Anaerocellum thermophilum</name>
    <dbReference type="NCBI Taxonomy" id="521460"/>
    <lineage>
        <taxon>Bacteria</taxon>
        <taxon>Bacillati</taxon>
        <taxon>Bacillota</taxon>
        <taxon>Bacillota incertae sedis</taxon>
        <taxon>Caldicellulosiruptorales</taxon>
        <taxon>Caldicellulosiruptoraceae</taxon>
        <taxon>Caldicellulosiruptor</taxon>
    </lineage>
</organism>